<feature type="chain" id="PRO_0000110106" description="Fluoride-specific ion channel FluC">
    <location>
        <begin position="1"/>
        <end position="144"/>
    </location>
</feature>
<feature type="transmembrane region" description="Helical" evidence="1">
    <location>
        <begin position="7"/>
        <end position="27"/>
    </location>
</feature>
<feature type="transmembrane region" description="Helical" evidence="1">
    <location>
        <begin position="33"/>
        <end position="53"/>
    </location>
</feature>
<feature type="transmembrane region" description="Helical" evidence="1">
    <location>
        <begin position="71"/>
        <end position="91"/>
    </location>
</feature>
<feature type="transmembrane region" description="Helical" evidence="1">
    <location>
        <begin position="105"/>
        <end position="125"/>
    </location>
</feature>
<feature type="binding site" evidence="1">
    <location>
        <position position="79"/>
    </location>
    <ligand>
        <name>Na(+)</name>
        <dbReference type="ChEBI" id="CHEBI:29101"/>
        <note>structural</note>
    </ligand>
</feature>
<feature type="binding site" evidence="1">
    <location>
        <position position="82"/>
    </location>
    <ligand>
        <name>Na(+)</name>
        <dbReference type="ChEBI" id="CHEBI:29101"/>
        <note>structural</note>
    </ligand>
</feature>
<comment type="function">
    <text evidence="1">Fluoride-specific ion channel. Important for reducing fluoride concentration in the cell, thus reducing its toxicity.</text>
</comment>
<comment type="catalytic activity">
    <reaction evidence="1">
        <text>fluoride(in) = fluoride(out)</text>
        <dbReference type="Rhea" id="RHEA:76159"/>
        <dbReference type="ChEBI" id="CHEBI:17051"/>
    </reaction>
    <physiologicalReaction direction="left-to-right" evidence="1">
        <dbReference type="Rhea" id="RHEA:76160"/>
    </physiologicalReaction>
</comment>
<comment type="activity regulation">
    <text evidence="1">Na(+) is not transported, but it plays an essential structural role and its presence is essential for fluoride channel function.</text>
</comment>
<comment type="subcellular location">
    <subcellularLocation>
        <location evidence="1">Cell inner membrane</location>
        <topology evidence="1">Multi-pass membrane protein</topology>
    </subcellularLocation>
</comment>
<comment type="similarity">
    <text evidence="1">Belongs to the fluoride channel Fluc/FEX (TC 1.A.43) family.</text>
</comment>
<evidence type="ECO:0000255" key="1">
    <source>
        <dbReference type="HAMAP-Rule" id="MF_00454"/>
    </source>
</evidence>
<proteinExistence type="inferred from homology"/>
<sequence>MSFTTCLIVMVGGALGTLARYLVSVAAMPISRFIPWGTILPINALGSFVIGFFGTLTLADGRYPVSENMRLFVMIGLCGGYTTFSSFSLQTLDLIRNDAWGRASVNVAASVILCIGAVALGHITADGFNTGAIRIAQTATEEDA</sequence>
<geneLocation type="plasmid">
    <name>pGOX1</name>
</geneLocation>
<gene>
    <name evidence="1" type="primary">fluC</name>
    <name evidence="1" type="synonym">crcB</name>
    <name type="ordered locus">GOX2653</name>
</gene>
<dbReference type="EMBL" id="CP000004">
    <property type="protein sequence ID" value="AAW59717.1"/>
    <property type="molecule type" value="Genomic_DNA"/>
</dbReference>
<dbReference type="RefSeq" id="WP_010510921.1">
    <property type="nucleotide sequence ID" value="NZ_LT900339.1"/>
</dbReference>
<dbReference type="SMR" id="Q5HXN6"/>
<dbReference type="KEGG" id="gox:GOX2653"/>
<dbReference type="eggNOG" id="COG0239">
    <property type="taxonomic scope" value="Bacteria"/>
</dbReference>
<dbReference type="HOGENOM" id="CLU_114342_3_0_5"/>
<dbReference type="Proteomes" id="UP000006375">
    <property type="component" value="Plasmid pGOX1"/>
</dbReference>
<dbReference type="GO" id="GO:0005886">
    <property type="term" value="C:plasma membrane"/>
    <property type="evidence" value="ECO:0007669"/>
    <property type="project" value="UniProtKB-SubCell"/>
</dbReference>
<dbReference type="GO" id="GO:0062054">
    <property type="term" value="F:fluoride channel activity"/>
    <property type="evidence" value="ECO:0007669"/>
    <property type="project" value="UniProtKB-UniRule"/>
</dbReference>
<dbReference type="GO" id="GO:0046872">
    <property type="term" value="F:metal ion binding"/>
    <property type="evidence" value="ECO:0007669"/>
    <property type="project" value="UniProtKB-KW"/>
</dbReference>
<dbReference type="GO" id="GO:0140114">
    <property type="term" value="P:cellular detoxification of fluoride"/>
    <property type="evidence" value="ECO:0007669"/>
    <property type="project" value="UniProtKB-UniRule"/>
</dbReference>
<dbReference type="HAMAP" id="MF_00454">
    <property type="entry name" value="FluC"/>
    <property type="match status" value="1"/>
</dbReference>
<dbReference type="InterPro" id="IPR003691">
    <property type="entry name" value="FluC"/>
</dbReference>
<dbReference type="NCBIfam" id="TIGR00494">
    <property type="entry name" value="crcB"/>
    <property type="match status" value="1"/>
</dbReference>
<dbReference type="NCBIfam" id="NF010802">
    <property type="entry name" value="PRK14206.1"/>
    <property type="match status" value="1"/>
</dbReference>
<dbReference type="PANTHER" id="PTHR28259">
    <property type="entry name" value="FLUORIDE EXPORT PROTEIN 1-RELATED"/>
    <property type="match status" value="1"/>
</dbReference>
<dbReference type="PANTHER" id="PTHR28259:SF1">
    <property type="entry name" value="FLUORIDE EXPORT PROTEIN 1-RELATED"/>
    <property type="match status" value="1"/>
</dbReference>
<dbReference type="Pfam" id="PF02537">
    <property type="entry name" value="CRCB"/>
    <property type="match status" value="1"/>
</dbReference>
<keyword id="KW-0997">Cell inner membrane</keyword>
<keyword id="KW-1003">Cell membrane</keyword>
<keyword id="KW-0407">Ion channel</keyword>
<keyword id="KW-0406">Ion transport</keyword>
<keyword id="KW-0472">Membrane</keyword>
<keyword id="KW-0479">Metal-binding</keyword>
<keyword id="KW-0614">Plasmid</keyword>
<keyword id="KW-1185">Reference proteome</keyword>
<keyword id="KW-0915">Sodium</keyword>
<keyword id="KW-0812">Transmembrane</keyword>
<keyword id="KW-1133">Transmembrane helix</keyword>
<keyword id="KW-0813">Transport</keyword>
<reference key="1">
    <citation type="journal article" date="2005" name="Nat. Biotechnol.">
        <title>Complete genome sequence of the acetic acid bacterium Gluconobacter oxydans.</title>
        <authorList>
            <person name="Prust C."/>
            <person name="Hoffmeister M."/>
            <person name="Liesegang H."/>
            <person name="Wiezer A."/>
            <person name="Fricke W.F."/>
            <person name="Ehrenreich A."/>
            <person name="Gottschalk G."/>
            <person name="Deppenmeier U."/>
        </authorList>
    </citation>
    <scope>NUCLEOTIDE SEQUENCE [LARGE SCALE GENOMIC DNA]</scope>
    <source>
        <strain>621H</strain>
    </source>
</reference>
<name>FLUC_GLUOX</name>
<protein>
    <recommendedName>
        <fullName evidence="1">Fluoride-specific ion channel FluC</fullName>
    </recommendedName>
</protein>
<organism>
    <name type="scientific">Gluconobacter oxydans (strain 621H)</name>
    <name type="common">Gluconobacter suboxydans</name>
    <dbReference type="NCBI Taxonomy" id="290633"/>
    <lineage>
        <taxon>Bacteria</taxon>
        <taxon>Pseudomonadati</taxon>
        <taxon>Pseudomonadota</taxon>
        <taxon>Alphaproteobacteria</taxon>
        <taxon>Acetobacterales</taxon>
        <taxon>Acetobacteraceae</taxon>
        <taxon>Gluconobacter</taxon>
    </lineage>
</organism>
<accession>Q5HXN6</accession>